<comment type="subcellular location">
    <subcellularLocation>
        <location evidence="3">Cell membrane</location>
        <topology evidence="3">Single-pass membrane protein</topology>
    </subcellularLocation>
</comment>
<comment type="similarity">
    <text evidence="3">Belongs to the peptidase S1C family.</text>
</comment>
<dbReference type="EC" id="3.4.21.-"/>
<dbReference type="EMBL" id="BX571856">
    <property type="protein sequence ID" value="CAG39997.1"/>
    <property type="molecule type" value="Genomic_DNA"/>
</dbReference>
<dbReference type="SMR" id="Q6GI62"/>
<dbReference type="KEGG" id="sar:SAR0992"/>
<dbReference type="HOGENOM" id="CLU_027421_0_0_9"/>
<dbReference type="Proteomes" id="UP000000596">
    <property type="component" value="Chromosome"/>
</dbReference>
<dbReference type="GO" id="GO:0005886">
    <property type="term" value="C:plasma membrane"/>
    <property type="evidence" value="ECO:0007669"/>
    <property type="project" value="UniProtKB-SubCell"/>
</dbReference>
<dbReference type="GO" id="GO:0004252">
    <property type="term" value="F:serine-type endopeptidase activity"/>
    <property type="evidence" value="ECO:0007669"/>
    <property type="project" value="InterPro"/>
</dbReference>
<dbReference type="GO" id="GO:0006508">
    <property type="term" value="P:proteolysis"/>
    <property type="evidence" value="ECO:0007669"/>
    <property type="project" value="UniProtKB-KW"/>
</dbReference>
<dbReference type="CDD" id="cd06781">
    <property type="entry name" value="cpPDZ_BsHtra-like"/>
    <property type="match status" value="1"/>
</dbReference>
<dbReference type="Gene3D" id="2.30.42.10">
    <property type="match status" value="1"/>
</dbReference>
<dbReference type="Gene3D" id="2.40.10.10">
    <property type="entry name" value="Trypsin-like serine proteases"/>
    <property type="match status" value="2"/>
</dbReference>
<dbReference type="InterPro" id="IPR051201">
    <property type="entry name" value="Chloro_Bact_Ser_Proteases"/>
</dbReference>
<dbReference type="InterPro" id="IPR001478">
    <property type="entry name" value="PDZ"/>
</dbReference>
<dbReference type="InterPro" id="IPR036034">
    <property type="entry name" value="PDZ_sf"/>
</dbReference>
<dbReference type="InterPro" id="IPR009003">
    <property type="entry name" value="Peptidase_S1_PA"/>
</dbReference>
<dbReference type="InterPro" id="IPR043504">
    <property type="entry name" value="Peptidase_S1_PA_chymotrypsin"/>
</dbReference>
<dbReference type="InterPro" id="IPR001940">
    <property type="entry name" value="Peptidase_S1C"/>
</dbReference>
<dbReference type="PANTHER" id="PTHR43343">
    <property type="entry name" value="PEPTIDASE S12"/>
    <property type="match status" value="1"/>
</dbReference>
<dbReference type="PANTHER" id="PTHR43343:SF3">
    <property type="entry name" value="PROTEASE DO-LIKE 8, CHLOROPLASTIC"/>
    <property type="match status" value="1"/>
</dbReference>
<dbReference type="Pfam" id="PF13180">
    <property type="entry name" value="PDZ_2"/>
    <property type="match status" value="1"/>
</dbReference>
<dbReference type="Pfam" id="PF13365">
    <property type="entry name" value="Trypsin_2"/>
    <property type="match status" value="1"/>
</dbReference>
<dbReference type="PRINTS" id="PR00834">
    <property type="entry name" value="PROTEASES2C"/>
</dbReference>
<dbReference type="SMART" id="SM00228">
    <property type="entry name" value="PDZ"/>
    <property type="match status" value="1"/>
</dbReference>
<dbReference type="SUPFAM" id="SSF50156">
    <property type="entry name" value="PDZ domain-like"/>
    <property type="match status" value="1"/>
</dbReference>
<dbReference type="SUPFAM" id="SSF50494">
    <property type="entry name" value="Trypsin-like serine proteases"/>
    <property type="match status" value="1"/>
</dbReference>
<feature type="chain" id="PRO_0000252468" description="Serine protease HtrA-like">
    <location>
        <begin position="1"/>
        <end position="769"/>
    </location>
</feature>
<feature type="transmembrane region" description="Helical" evidence="1">
    <location>
        <begin position="410"/>
        <end position="430"/>
    </location>
</feature>
<feature type="domain" description="PDZ">
    <location>
        <begin position="680"/>
        <end position="733"/>
    </location>
</feature>
<feature type="region of interest" description="Disordered" evidence="2">
    <location>
        <begin position="1"/>
        <end position="388"/>
    </location>
</feature>
<feature type="compositionally biased region" description="Basic residues" evidence="2">
    <location>
        <begin position="1"/>
        <end position="20"/>
    </location>
</feature>
<feature type="compositionally biased region" description="Basic and acidic residues" evidence="2">
    <location>
        <begin position="21"/>
        <end position="64"/>
    </location>
</feature>
<feature type="compositionally biased region" description="Basic and acidic residues" evidence="2">
    <location>
        <begin position="71"/>
        <end position="87"/>
    </location>
</feature>
<feature type="compositionally biased region" description="Basic and acidic residues" evidence="2">
    <location>
        <begin position="96"/>
        <end position="108"/>
    </location>
</feature>
<feature type="compositionally biased region" description="Polar residues" evidence="2">
    <location>
        <begin position="126"/>
        <end position="139"/>
    </location>
</feature>
<feature type="compositionally biased region" description="Basic and acidic residues" evidence="2">
    <location>
        <begin position="140"/>
        <end position="186"/>
    </location>
</feature>
<feature type="compositionally biased region" description="Polar residues" evidence="2">
    <location>
        <begin position="247"/>
        <end position="262"/>
    </location>
</feature>
<feature type="compositionally biased region" description="Basic and acidic residues" evidence="2">
    <location>
        <begin position="264"/>
        <end position="296"/>
    </location>
</feature>
<feature type="compositionally biased region" description="Basic and acidic residues" evidence="2">
    <location>
        <begin position="310"/>
        <end position="330"/>
    </location>
</feature>
<feature type="compositionally biased region" description="Polar residues" evidence="2">
    <location>
        <begin position="331"/>
        <end position="347"/>
    </location>
</feature>
<feature type="compositionally biased region" description="Basic and acidic residues" evidence="2">
    <location>
        <begin position="348"/>
        <end position="364"/>
    </location>
</feature>
<feature type="compositionally biased region" description="Polar residues" evidence="2">
    <location>
        <begin position="366"/>
        <end position="388"/>
    </location>
</feature>
<feature type="active site" description="Charge relay system" evidence="1">
    <location>
        <position position="504"/>
    </location>
</feature>
<feature type="active site" description="Charge relay system" evidence="1">
    <location>
        <position position="534"/>
    </location>
</feature>
<feature type="active site" description="Charge relay system" evidence="1">
    <location>
        <position position="619"/>
    </location>
</feature>
<reference key="1">
    <citation type="journal article" date="2004" name="Proc. Natl. Acad. Sci. U.S.A.">
        <title>Complete genomes of two clinical Staphylococcus aureus strains: evidence for the rapid evolution of virulence and drug resistance.</title>
        <authorList>
            <person name="Holden M.T.G."/>
            <person name="Feil E.J."/>
            <person name="Lindsay J.A."/>
            <person name="Peacock S.J."/>
            <person name="Day N.P.J."/>
            <person name="Enright M.C."/>
            <person name="Foster T.J."/>
            <person name="Moore C.E."/>
            <person name="Hurst L."/>
            <person name="Atkin R."/>
            <person name="Barron A."/>
            <person name="Bason N."/>
            <person name="Bentley S.D."/>
            <person name="Chillingworth C."/>
            <person name="Chillingworth T."/>
            <person name="Churcher C."/>
            <person name="Clark L."/>
            <person name="Corton C."/>
            <person name="Cronin A."/>
            <person name="Doggett J."/>
            <person name="Dowd L."/>
            <person name="Feltwell T."/>
            <person name="Hance Z."/>
            <person name="Harris B."/>
            <person name="Hauser H."/>
            <person name="Holroyd S."/>
            <person name="Jagels K."/>
            <person name="James K.D."/>
            <person name="Lennard N."/>
            <person name="Line A."/>
            <person name="Mayes R."/>
            <person name="Moule S."/>
            <person name="Mungall K."/>
            <person name="Ormond D."/>
            <person name="Quail M.A."/>
            <person name="Rabbinowitsch E."/>
            <person name="Rutherford K.M."/>
            <person name="Sanders M."/>
            <person name="Sharp S."/>
            <person name="Simmonds M."/>
            <person name="Stevens K."/>
            <person name="Whitehead S."/>
            <person name="Barrell B.G."/>
            <person name="Spratt B.G."/>
            <person name="Parkhill J."/>
        </authorList>
    </citation>
    <scope>NUCLEOTIDE SEQUENCE [LARGE SCALE GENOMIC DNA]</scope>
    <source>
        <strain>MRSA252</strain>
    </source>
</reference>
<evidence type="ECO:0000255" key="1"/>
<evidence type="ECO:0000256" key="2">
    <source>
        <dbReference type="SAM" id="MobiDB-lite"/>
    </source>
</evidence>
<evidence type="ECO:0000305" key="3"/>
<sequence>MDIGKKHVIPKSQYRRKRREFFHNEDREENLNQHQDKQNIDNTTSKKADKQIHKDSIDKHERFKNSLSSHLEQRNRDVNENKAEESKSNQGSKSAYNKDHYLTDDVSKKQNSLDSVDQDTEKSKYYEQNTEATLSTNSTDKVESTDMRKLSSDKNKVGHEEQHVLSKPSEHDKETRIDFESSRTDSDSSMQTEKIKKDSSDGNKSSNLKSEVISDKSNSVPILSESDDEVNNQKPLTLPEEQKLKRQQSQNEQTKTYTYGDSEQNDKSNHENDLSHHTPSISDDKDYVMREDHIVDDNPDNDINTPSLSKIDDDRKLDEKIHVEDKHKQNADSSETVGYQSQSSASHRSTEKRNMAINDHDKLNGQKPNTKTSANNNQKKATSKLNKGRATNNNYSAILKKFWMMYWPKLVILMGIIILIVILNAIFNNVNKNDRMNDNNDADAQKYTTTMKNANNAVKSVVTVENETSKDSSLPKDKASQDEVGSGVVYKKSGDTLYIVTNAHVVGDKENQKITFSNNKSVVGKVLGKDKWSDLAVVKATSSDSSVKEIAIGDSNNLVLGEPILVVGNPLGVDFKGTVTEGIISGLNRNVPIDFDKDNKYDMLMKAFQIDASVNPGNSGGAVVNREGKLIGVVAAKISMPNVENMSFAIPVNEVQKIVKELETKGKIDYPDVGVKMKNIASLNSFERQAVKLLGKVKNGVVVDQVDNNGLADQSGLKKGDVITELDGKLLEDDLRFRQIIFSHKDDLKSITAKIYRDGKEKEINIKLK</sequence>
<name>HTRAL_STAAR</name>
<protein>
    <recommendedName>
        <fullName>Serine protease HtrA-like</fullName>
        <ecNumber>3.4.21.-</ecNumber>
    </recommendedName>
</protein>
<keyword id="KW-1003">Cell membrane</keyword>
<keyword id="KW-0378">Hydrolase</keyword>
<keyword id="KW-0472">Membrane</keyword>
<keyword id="KW-0645">Protease</keyword>
<keyword id="KW-0720">Serine protease</keyword>
<keyword id="KW-0812">Transmembrane</keyword>
<keyword id="KW-1133">Transmembrane helix</keyword>
<organism>
    <name type="scientific">Staphylococcus aureus (strain MRSA252)</name>
    <dbReference type="NCBI Taxonomy" id="282458"/>
    <lineage>
        <taxon>Bacteria</taxon>
        <taxon>Bacillati</taxon>
        <taxon>Bacillota</taxon>
        <taxon>Bacilli</taxon>
        <taxon>Bacillales</taxon>
        <taxon>Staphylococcaceae</taxon>
        <taxon>Staphylococcus</taxon>
    </lineage>
</organism>
<proteinExistence type="inferred from homology"/>
<accession>Q6GI62</accession>
<gene>
    <name type="ordered locus">SAR0992</name>
</gene>